<organism>
    <name type="scientific">Homo sapiens</name>
    <name type="common">Human</name>
    <dbReference type="NCBI Taxonomy" id="9606"/>
    <lineage>
        <taxon>Eukaryota</taxon>
        <taxon>Metazoa</taxon>
        <taxon>Chordata</taxon>
        <taxon>Craniata</taxon>
        <taxon>Vertebrata</taxon>
        <taxon>Euteleostomi</taxon>
        <taxon>Mammalia</taxon>
        <taxon>Eutheria</taxon>
        <taxon>Euarchontoglires</taxon>
        <taxon>Primates</taxon>
        <taxon>Haplorrhini</taxon>
        <taxon>Catarrhini</taxon>
        <taxon>Hominidae</taxon>
        <taxon>Homo</taxon>
    </lineage>
</organism>
<feature type="chain" id="PRO_0000435289" description="PRAME family member 27">
    <location>
        <begin position="1"/>
        <end position="478"/>
    </location>
</feature>
<feature type="repeat" description="LRR 1" evidence="2">
    <location>
        <begin position="17"/>
        <end position="40"/>
    </location>
</feature>
<feature type="repeat" description="LRR 1; degenerate" evidence="1">
    <location>
        <begin position="99"/>
        <end position="126"/>
    </location>
</feature>
<feature type="repeat" description="LRR 2; degenerate" evidence="1">
    <location>
        <begin position="181"/>
        <end position="205"/>
    </location>
</feature>
<feature type="repeat" description="LRR 3; degenerate" evidence="1">
    <location>
        <begin position="206"/>
        <end position="232"/>
    </location>
</feature>
<feature type="repeat" description="LRR 4; degenerate" evidence="1">
    <location>
        <begin position="233"/>
        <end position="268"/>
    </location>
</feature>
<feature type="repeat" description="LRR 5" evidence="1">
    <location>
        <begin position="269"/>
        <end position="294"/>
    </location>
</feature>
<feature type="repeat" description="LRR 6" evidence="1">
    <location>
        <begin position="295"/>
        <end position="326"/>
    </location>
</feature>
<feature type="repeat" description="LRR 7" evidence="1">
    <location>
        <begin position="327"/>
        <end position="348"/>
    </location>
</feature>
<feature type="repeat" description="LRR 8" evidence="1">
    <location>
        <begin position="351"/>
        <end position="378"/>
    </location>
</feature>
<feature type="repeat" description="LRR 9" evidence="1">
    <location>
        <begin position="379"/>
        <end position="403"/>
    </location>
</feature>
<comment type="similarity">
    <text evidence="3">Belongs to the PRAME family.</text>
</comment>
<dbReference type="EMBL" id="AC245056">
    <property type="status" value="NOT_ANNOTATED_CDS"/>
    <property type="molecule type" value="Genomic_DNA"/>
</dbReference>
<dbReference type="CCDS" id="CCDS72704.1"/>
<dbReference type="RefSeq" id="NP_001287820.1">
    <property type="nucleotide sequence ID" value="NM_001300891.2"/>
</dbReference>
<dbReference type="FunCoup" id="A3QJZ7">
    <property type="interactions" value="105"/>
</dbReference>
<dbReference type="STRING" id="9606.ENSP00000393136"/>
<dbReference type="iPTMnet" id="A3QJZ7"/>
<dbReference type="PhosphoSitePlus" id="A3QJZ7"/>
<dbReference type="SwissPalm" id="A3QJZ7"/>
<dbReference type="BioMuta" id="PRAMEF27"/>
<dbReference type="MassIVE" id="A3QJZ7"/>
<dbReference type="PaxDb" id="9606-ENSP00000393136"/>
<dbReference type="DNASU" id="101929983"/>
<dbReference type="Ensembl" id="ENST00000436041.6">
    <property type="protein sequence ID" value="ENSP00000393136.2"/>
    <property type="gene ID" value="ENSG00000274764.6"/>
</dbReference>
<dbReference type="Ensembl" id="ENST00000631964.1">
    <property type="protein sequence ID" value="ENSP00000488085.1"/>
    <property type="gene ID" value="ENSG00000282437.2"/>
</dbReference>
<dbReference type="Ensembl" id="ENST00000636332.1">
    <property type="protein sequence ID" value="ENSP00000490306.1"/>
    <property type="gene ID" value="ENSG00000283425.1"/>
</dbReference>
<dbReference type="GeneID" id="101929983"/>
<dbReference type="KEGG" id="hsa:101929983"/>
<dbReference type="MANE-Select" id="ENST00000436041.6">
    <property type="protein sequence ID" value="ENSP00000393136.2"/>
    <property type="RefSeq nucleotide sequence ID" value="NM_001300891.2"/>
    <property type="RefSeq protein sequence ID" value="NP_001287820.1"/>
</dbReference>
<dbReference type="UCSC" id="uc057ckn.1">
    <property type="organism name" value="human"/>
</dbReference>
<dbReference type="AGR" id="HGNC:51234"/>
<dbReference type="CTD" id="101929983"/>
<dbReference type="GeneCards" id="PRAMEF27"/>
<dbReference type="HGNC" id="HGNC:51234">
    <property type="gene designation" value="PRAMEF27"/>
</dbReference>
<dbReference type="HPA" id="ENSG00000274764">
    <property type="expression patterns" value="Not detected"/>
</dbReference>
<dbReference type="neXtProt" id="NX_A3QJZ7"/>
<dbReference type="VEuPathDB" id="HostDB:ENSG00000274764"/>
<dbReference type="eggNOG" id="ENOG502QWSJ">
    <property type="taxonomic scope" value="Eukaryota"/>
</dbReference>
<dbReference type="GeneTree" id="ENSGT01030000234531"/>
<dbReference type="HOGENOM" id="CLU_039635_2_1_1"/>
<dbReference type="InParanoid" id="A3QJZ7"/>
<dbReference type="OMA" id="NIDQRCC"/>
<dbReference type="OrthoDB" id="9533139at2759"/>
<dbReference type="PAN-GO" id="A3QJZ7">
    <property type="GO annotations" value="1 GO annotation based on evolutionary models"/>
</dbReference>
<dbReference type="BioGRID-ORCS" id="101929983">
    <property type="hits" value="0 hits in 105 CRISPR screens"/>
</dbReference>
<dbReference type="GenomeRNAi" id="101929983"/>
<dbReference type="Pharos" id="A3QJZ7">
    <property type="development level" value="Tdark"/>
</dbReference>
<dbReference type="PRO" id="PR:A3QJZ7"/>
<dbReference type="Proteomes" id="UP000005640">
    <property type="component" value="Chromosome 1"/>
</dbReference>
<dbReference type="RNAct" id="A3QJZ7">
    <property type="molecule type" value="protein"/>
</dbReference>
<dbReference type="GO" id="GO:0031462">
    <property type="term" value="C:Cul2-RING ubiquitin ligase complex"/>
    <property type="evidence" value="ECO:0000318"/>
    <property type="project" value="GO_Central"/>
</dbReference>
<dbReference type="GO" id="GO:0005737">
    <property type="term" value="C:cytoplasm"/>
    <property type="evidence" value="ECO:0000318"/>
    <property type="project" value="GO_Central"/>
</dbReference>
<dbReference type="GO" id="GO:1990756">
    <property type="term" value="F:ubiquitin-like ligase-substrate adaptor activity"/>
    <property type="evidence" value="ECO:0000318"/>
    <property type="project" value="GO_Central"/>
</dbReference>
<dbReference type="GO" id="GO:0043066">
    <property type="term" value="P:negative regulation of apoptotic process"/>
    <property type="evidence" value="ECO:0007669"/>
    <property type="project" value="InterPro"/>
</dbReference>
<dbReference type="GO" id="GO:0045596">
    <property type="term" value="P:negative regulation of cell differentiation"/>
    <property type="evidence" value="ECO:0007669"/>
    <property type="project" value="InterPro"/>
</dbReference>
<dbReference type="GO" id="GO:0045892">
    <property type="term" value="P:negative regulation of DNA-templated transcription"/>
    <property type="evidence" value="ECO:0007669"/>
    <property type="project" value="InterPro"/>
</dbReference>
<dbReference type="GO" id="GO:0008284">
    <property type="term" value="P:positive regulation of cell population proliferation"/>
    <property type="evidence" value="ECO:0007669"/>
    <property type="project" value="InterPro"/>
</dbReference>
<dbReference type="GO" id="GO:0043161">
    <property type="term" value="P:proteasome-mediated ubiquitin-dependent protein catabolic process"/>
    <property type="evidence" value="ECO:0000318"/>
    <property type="project" value="GO_Central"/>
</dbReference>
<dbReference type="FunFam" id="3.80.10.10:FF:000079">
    <property type="entry name" value="PRAME family member 18"/>
    <property type="match status" value="1"/>
</dbReference>
<dbReference type="Gene3D" id="3.80.10.10">
    <property type="entry name" value="Ribonuclease Inhibitor"/>
    <property type="match status" value="1"/>
</dbReference>
<dbReference type="InterPro" id="IPR032675">
    <property type="entry name" value="LRR_dom_sf"/>
</dbReference>
<dbReference type="InterPro" id="IPR026271">
    <property type="entry name" value="PRAME"/>
</dbReference>
<dbReference type="InterPro" id="IPR050694">
    <property type="entry name" value="PRAME_domain"/>
</dbReference>
<dbReference type="PANTHER" id="PTHR14224:SF19">
    <property type="entry name" value="PRAME FAMILY MEMBER 11-RELATED"/>
    <property type="match status" value="1"/>
</dbReference>
<dbReference type="PANTHER" id="PTHR14224">
    <property type="entry name" value="SIMILAR TO PREFERENTIALLY EXPRESSED ANTIGEN IN MELANOMA-LIKE 3"/>
    <property type="match status" value="1"/>
</dbReference>
<dbReference type="PIRSF" id="PIRSF038286">
    <property type="entry name" value="PRAME"/>
    <property type="match status" value="1"/>
</dbReference>
<dbReference type="SUPFAM" id="SSF52047">
    <property type="entry name" value="RNI-like"/>
    <property type="match status" value="1"/>
</dbReference>
<evidence type="ECO:0000250" key="1">
    <source>
        <dbReference type="UniProtKB" id="Q3UWY1"/>
    </source>
</evidence>
<evidence type="ECO:0000255" key="2"/>
<evidence type="ECO:0000305" key="3"/>
<evidence type="ECO:0000312" key="4">
    <source>
        <dbReference type="HGNC" id="HGNC:51234"/>
    </source>
</evidence>
<gene>
    <name evidence="4" type="primary">PRAMEF27</name>
</gene>
<protein>
    <recommendedName>
        <fullName evidence="4">PRAME family member 27</fullName>
    </recommendedName>
</protein>
<proteinExistence type="inferred from homology"/>
<reference key="1">
    <citation type="journal article" date="2006" name="Nature">
        <title>The DNA sequence and biological annotation of human chromosome 1.</title>
        <authorList>
            <person name="Gregory S.G."/>
            <person name="Barlow K.F."/>
            <person name="McLay K.E."/>
            <person name="Kaul R."/>
            <person name="Swarbreck D."/>
            <person name="Dunham A."/>
            <person name="Scott C.E."/>
            <person name="Howe K.L."/>
            <person name="Woodfine K."/>
            <person name="Spencer C.C.A."/>
            <person name="Jones M.C."/>
            <person name="Gillson C."/>
            <person name="Searle S."/>
            <person name="Zhou Y."/>
            <person name="Kokocinski F."/>
            <person name="McDonald L."/>
            <person name="Evans R."/>
            <person name="Phillips K."/>
            <person name="Atkinson A."/>
            <person name="Cooper R."/>
            <person name="Jones C."/>
            <person name="Hall R.E."/>
            <person name="Andrews T.D."/>
            <person name="Lloyd C."/>
            <person name="Ainscough R."/>
            <person name="Almeida J.P."/>
            <person name="Ambrose K.D."/>
            <person name="Anderson F."/>
            <person name="Andrew R.W."/>
            <person name="Ashwell R.I.S."/>
            <person name="Aubin K."/>
            <person name="Babbage A.K."/>
            <person name="Bagguley C.L."/>
            <person name="Bailey J."/>
            <person name="Beasley H."/>
            <person name="Bethel G."/>
            <person name="Bird C.P."/>
            <person name="Bray-Allen S."/>
            <person name="Brown J.Y."/>
            <person name="Brown A.J."/>
            <person name="Buckley D."/>
            <person name="Burton J."/>
            <person name="Bye J."/>
            <person name="Carder C."/>
            <person name="Chapman J.C."/>
            <person name="Clark S.Y."/>
            <person name="Clarke G."/>
            <person name="Clee C."/>
            <person name="Cobley V."/>
            <person name="Collier R.E."/>
            <person name="Corby N."/>
            <person name="Coville G.J."/>
            <person name="Davies J."/>
            <person name="Deadman R."/>
            <person name="Dunn M."/>
            <person name="Earthrowl M."/>
            <person name="Ellington A.G."/>
            <person name="Errington H."/>
            <person name="Frankish A."/>
            <person name="Frankland J."/>
            <person name="French L."/>
            <person name="Garner P."/>
            <person name="Garnett J."/>
            <person name="Gay L."/>
            <person name="Ghori M.R.J."/>
            <person name="Gibson R."/>
            <person name="Gilby L.M."/>
            <person name="Gillett W."/>
            <person name="Glithero R.J."/>
            <person name="Grafham D.V."/>
            <person name="Griffiths C."/>
            <person name="Griffiths-Jones S."/>
            <person name="Grocock R."/>
            <person name="Hammond S."/>
            <person name="Harrison E.S.I."/>
            <person name="Hart E."/>
            <person name="Haugen E."/>
            <person name="Heath P.D."/>
            <person name="Holmes S."/>
            <person name="Holt K."/>
            <person name="Howden P.J."/>
            <person name="Hunt A.R."/>
            <person name="Hunt S.E."/>
            <person name="Hunter G."/>
            <person name="Isherwood J."/>
            <person name="James R."/>
            <person name="Johnson C."/>
            <person name="Johnson D."/>
            <person name="Joy A."/>
            <person name="Kay M."/>
            <person name="Kershaw J.K."/>
            <person name="Kibukawa M."/>
            <person name="Kimberley A.M."/>
            <person name="King A."/>
            <person name="Knights A.J."/>
            <person name="Lad H."/>
            <person name="Laird G."/>
            <person name="Lawlor S."/>
            <person name="Leongamornlert D.A."/>
            <person name="Lloyd D.M."/>
            <person name="Loveland J."/>
            <person name="Lovell J."/>
            <person name="Lush M.J."/>
            <person name="Lyne R."/>
            <person name="Martin S."/>
            <person name="Mashreghi-Mohammadi M."/>
            <person name="Matthews L."/>
            <person name="Matthews N.S.W."/>
            <person name="McLaren S."/>
            <person name="Milne S."/>
            <person name="Mistry S."/>
            <person name="Moore M.J.F."/>
            <person name="Nickerson T."/>
            <person name="O'Dell C.N."/>
            <person name="Oliver K."/>
            <person name="Palmeiri A."/>
            <person name="Palmer S.A."/>
            <person name="Parker A."/>
            <person name="Patel D."/>
            <person name="Pearce A.V."/>
            <person name="Peck A.I."/>
            <person name="Pelan S."/>
            <person name="Phelps K."/>
            <person name="Phillimore B.J."/>
            <person name="Plumb R."/>
            <person name="Rajan J."/>
            <person name="Raymond C."/>
            <person name="Rouse G."/>
            <person name="Saenphimmachak C."/>
            <person name="Sehra H.K."/>
            <person name="Sheridan E."/>
            <person name="Shownkeen R."/>
            <person name="Sims S."/>
            <person name="Skuce C.D."/>
            <person name="Smith M."/>
            <person name="Steward C."/>
            <person name="Subramanian S."/>
            <person name="Sycamore N."/>
            <person name="Tracey A."/>
            <person name="Tromans A."/>
            <person name="Van Helmond Z."/>
            <person name="Wall M."/>
            <person name="Wallis J.M."/>
            <person name="White S."/>
            <person name="Whitehead S.L."/>
            <person name="Wilkinson J.E."/>
            <person name="Willey D.L."/>
            <person name="Williams H."/>
            <person name="Wilming L."/>
            <person name="Wray P.W."/>
            <person name="Wu Z."/>
            <person name="Coulson A."/>
            <person name="Vaudin M."/>
            <person name="Sulston J.E."/>
            <person name="Durbin R.M."/>
            <person name="Hubbard T."/>
            <person name="Wooster R."/>
            <person name="Dunham I."/>
            <person name="Carter N.P."/>
            <person name="McVean G."/>
            <person name="Ross M.T."/>
            <person name="Harrow J."/>
            <person name="Olson M.V."/>
            <person name="Beck S."/>
            <person name="Rogers J."/>
            <person name="Bentley D.R."/>
        </authorList>
    </citation>
    <scope>NUCLEOTIDE SEQUENCE [LARGE SCALE GENOMIC DNA]</scope>
</reference>
<accession>A3QJZ7</accession>
<keyword id="KW-0433">Leucine-rich repeat</keyword>
<keyword id="KW-1185">Reference proteome</keyword>
<keyword id="KW-0677">Repeat</keyword>
<sequence length="478" mass="55206">MKMSIRTPPRLLELAGRSLLRDQALAMSTLEELPTELFPPLFMEAFSRRCCEALKLMVQAWPFRRLPLRPLIKMPCLEAFQAVLDGLDALLTQGVCPRRWKLQVLDLQDVCENFWMVWSEAMARGSFLNAKRNKTPVQDCPRMRGQQPLTVFVELWLKNRTLDEYLTYLLLWVKQRKDLLHLCCKKLKILGMPFRNIRSILKMVNLDCIQEVEVNCKWVLPILTQFTPYLGHMRNLQKLVLSHMDVSRYVSPEQKKEIVTQFTTQFLKLHCLQKLYMNSVSFLEGHLDQLLSCLKTSLKVLTITNCVLLESDLKHLSQCPSISQLKTLDLSGIRLTNYSLVPLQILLEKVAATLEYLDLDDCGIIDSQVNAILPALSRCFELNAFSFCGNPISMATLENLLSHTIILKNLCVEVYPAPRESYGADGTLCWNRFAQIRAELMNRVRDLRHPKRIFFCIDNCPDCGNRSFYDLEADQYCC</sequence>
<name>PRA27_HUMAN</name>